<reference key="1">
    <citation type="journal article" date="2016" name="Proc. Natl. Acad. Sci. U.S.A.">
        <title>The biosynthetic pathway of the nonsugar, high-intensity sweetener mogroside V from Siraitia grosvenorii.</title>
        <authorList>
            <person name="Itkin M."/>
            <person name="Davidovich-Rikanati R."/>
            <person name="Cohen S."/>
            <person name="Portnoy V."/>
            <person name="Doron-Faigenboim A."/>
            <person name="Oren E."/>
            <person name="Freilich S."/>
            <person name="Tzuri G."/>
            <person name="Baranes N."/>
            <person name="Shen S."/>
            <person name="Petreikov M."/>
            <person name="Sertchook R."/>
            <person name="Ben-Dor S."/>
            <person name="Gottlieb H."/>
            <person name="Hernandez A."/>
            <person name="Nelson D.R."/>
            <person name="Paris H.S."/>
            <person name="Tadmor Y."/>
            <person name="Burger Y."/>
            <person name="Lewinsohn E."/>
            <person name="Katzir N."/>
            <person name="Schaffer A."/>
        </authorList>
    </citation>
    <scope>NUCLEOTIDE SEQUENCE</scope>
    <scope>FUNCTION</scope>
    <scope>CATALYTIC ACTIVITY</scope>
    <scope>PATHWAY</scope>
    <scope>TISSUE SPECIFICITY</scope>
    <scope>GENE FAMILY</scope>
    <scope>NOMENCLATURE</scope>
</reference>
<reference key="2">
    <citation type="journal article" date="2023" name="Commun. Biol.">
        <title>Heterologous mogrosides biosynthesis in cucumber and tomato by genetic manipulation.</title>
        <authorList>
            <person name="Liao J."/>
            <person name="Liu T."/>
            <person name="Xie L."/>
            <person name="Mo C."/>
            <person name="Qiao J."/>
            <person name="Huang X."/>
            <person name="Cui S."/>
            <person name="Jia X."/>
            <person name="Luo Z."/>
            <person name="Ma X."/>
        </authorList>
    </citation>
    <scope>BIOTECHNOLOGY</scope>
</reference>
<name>EPH2_SIRGR</name>
<keyword id="KW-0378">Hydrolase</keyword>
<accession>P0DO69</accession>
<dbReference type="EC" id="3.3.2.10" evidence="4"/>
<dbReference type="EC" id="3.3.2.-" evidence="4"/>
<dbReference type="SMR" id="P0DO69"/>
<dbReference type="UniPathway" id="UPA00213"/>
<dbReference type="GO" id="GO:0016787">
    <property type="term" value="F:hydrolase activity"/>
    <property type="evidence" value="ECO:0007669"/>
    <property type="project" value="UniProtKB-KW"/>
</dbReference>
<dbReference type="FunFam" id="3.40.50.1820:FF:000161">
    <property type="entry name" value="Epoxide hydrolase"/>
    <property type="match status" value="1"/>
</dbReference>
<dbReference type="Gene3D" id="3.40.50.1820">
    <property type="entry name" value="alpha/beta hydrolase"/>
    <property type="match status" value="1"/>
</dbReference>
<dbReference type="InterPro" id="IPR000073">
    <property type="entry name" value="AB_hydrolase_1"/>
</dbReference>
<dbReference type="InterPro" id="IPR029058">
    <property type="entry name" value="AB_hydrolase_fold"/>
</dbReference>
<dbReference type="InterPro" id="IPR000639">
    <property type="entry name" value="Epox_hydrolase-like"/>
</dbReference>
<dbReference type="PANTHER" id="PTHR43329">
    <property type="entry name" value="EPOXIDE HYDROLASE"/>
    <property type="match status" value="1"/>
</dbReference>
<dbReference type="Pfam" id="PF00561">
    <property type="entry name" value="Abhydrolase_1"/>
    <property type="match status" value="1"/>
</dbReference>
<dbReference type="PRINTS" id="PR00111">
    <property type="entry name" value="ABHYDROLASE"/>
</dbReference>
<dbReference type="PRINTS" id="PR00412">
    <property type="entry name" value="EPOXHYDRLASE"/>
</dbReference>
<dbReference type="SUPFAM" id="SSF53474">
    <property type="entry name" value="alpha/beta-Hydrolases"/>
    <property type="match status" value="1"/>
</dbReference>
<comment type="function">
    <text evidence="4">Epoxide hydrolase involved in the biosynthesis of cucurbitacin and mogroside tetracyclic triterpene natural products (e.g. siamenoside I and mogrosides IV, V and VI) (PubMed:27821754). Cucurbitacins have cytotoxic properties and exhibit deterrent taste as a defense barrier against herbivores (PubMed:27821754). Mogrosides are nonsugar highly oxygenated compounds used as high-intensity zero-calorie sweeteners; they also possess pharmacological properties such as regulating immunity, lowering blood sugar and lipid levels, protecting the liver, and acting as antioxidants and antitumor agents (PubMed:27821754). Catalyzes the hydrolysis of aromatic epoxide-containing substrates, such as the conversion of 24,25-epoxycucurbitadienol to 24,25-dihydroxycucurbitadienol (PubMed:27821754).</text>
</comment>
<comment type="catalytic activity">
    <reaction evidence="4">
        <text>an epoxide + H2O = an ethanediol</text>
        <dbReference type="Rhea" id="RHEA:19037"/>
        <dbReference type="ChEBI" id="CHEBI:15377"/>
        <dbReference type="ChEBI" id="CHEBI:32955"/>
        <dbReference type="ChEBI" id="CHEBI:140594"/>
        <dbReference type="EC" id="3.3.2.10"/>
    </reaction>
    <physiologicalReaction direction="left-to-right" evidence="4">
        <dbReference type="Rhea" id="RHEA:19038"/>
    </physiologicalReaction>
</comment>
<comment type="catalytic activity">
    <reaction evidence="4">
        <text>(24S)-24,25-epoxycucurbitadienol + H2O = (24R)-24,25-dihydroxycucurbitadienol</text>
        <dbReference type="Rhea" id="RHEA:81855"/>
        <dbReference type="ChEBI" id="CHEBI:15377"/>
        <dbReference type="ChEBI" id="CHEBI:229949"/>
        <dbReference type="ChEBI" id="CHEBI:229950"/>
    </reaction>
    <physiologicalReaction direction="left-to-right" evidence="4">
        <dbReference type="Rhea" id="RHEA:81856"/>
    </physiologicalReaction>
</comment>
<comment type="pathway">
    <text evidence="4">Secondary metabolite biosynthesis; terpenoid biosynthesis.</text>
</comment>
<comment type="subunit">
    <text evidence="2">Homodimer.</text>
</comment>
<comment type="tissue specificity">
    <text evidence="4">Highly expressed in young fruits 15 days after anthesis (15-DAA) (PubMed:27821754). Also observed in stems and leaves (PubMed:27821754).</text>
</comment>
<comment type="biotechnology">
    <text evidence="5">C.sativus and L.esculentum expressing S.grosvenorii genes SgSQE1, SgCS, SgEPH2, SgP450, SgUGT269-1 and SgUGT289-3 accumulate siamenoside I and mogrosides III and V, thus providing a strategy for vegetable flavor improvement or for heterologous biosynthesis of mogrosides.</text>
</comment>
<comment type="miscellaneous">
    <text evidence="9">Mogrosides, the major active constituents of S.grosvenorii fruits, are a mixture of cucurbitane-type triterpenoid glycosides that have been proven to be powerful and zero-caloric sweeteners and can hence be used as a sucrose substitute for diabetic and obese patients.</text>
</comment>
<comment type="similarity">
    <text evidence="8">Belongs to the AB hydrolase superfamily. Epoxide hydrolase family.</text>
</comment>
<sequence>MEKIEHTTISTNGINMHVASIGSGPAVLFLHGFPELWYSWRHQLLFLSSMGYRAIAPDLRGFGDTDAPPSPSSYTAHHIVGDLVGLLDQLGIDQVFLVGHDWGAMMAWYFCLFRPDRVKALVNLSVHFLRRHPSIKFVDGFRALLGDDFYFCQFQEPGVAEADFGSVDVATMLKKFLTMRDPRPPMIPKEKGFRALETPDPLPAWLTEEDIDYFAGKFRKTGFTGGFNYYRAFNLTWELTAPWSGSEIKVAAKFIVGDLDLVYHFPGAKEYIHGGGFKKDVPLLEEVVVVDGAAHFINQERPAEISSLIYDFIKKF</sequence>
<organism>
    <name type="scientific">Siraitia grosvenorii</name>
    <name type="common">Monk's fruit</name>
    <name type="synonym">Luo han guo</name>
    <dbReference type="NCBI Taxonomy" id="190515"/>
    <lineage>
        <taxon>Eukaryota</taxon>
        <taxon>Viridiplantae</taxon>
        <taxon>Streptophyta</taxon>
        <taxon>Embryophyta</taxon>
        <taxon>Tracheophyta</taxon>
        <taxon>Spermatophyta</taxon>
        <taxon>Magnoliopsida</taxon>
        <taxon>eudicotyledons</taxon>
        <taxon>Gunneridae</taxon>
        <taxon>Pentapetalae</taxon>
        <taxon>rosids</taxon>
        <taxon>fabids</taxon>
        <taxon>Cucurbitales</taxon>
        <taxon>Cucurbitaceae</taxon>
        <taxon>Siraitieae</taxon>
        <taxon>Siraitia</taxon>
    </lineage>
</organism>
<feature type="chain" id="PRO_0000460916" description="Epoxide hydrolase 2">
    <location>
        <begin position="1"/>
        <end position="316"/>
    </location>
</feature>
<feature type="domain" description="AB hydrolase-1" evidence="3">
    <location>
        <begin position="25"/>
        <end position="302"/>
    </location>
</feature>
<feature type="active site" description="Nucleophile" evidence="1">
    <location>
        <position position="101"/>
    </location>
</feature>
<feature type="active site" description="Proton donor" evidence="1">
    <location>
        <position position="230"/>
    </location>
</feature>
<feature type="active site" description="Proton acceptor" evidence="1">
    <location>
        <position position="295"/>
    </location>
</feature>
<feature type="binding site" evidence="1">
    <location>
        <position position="150"/>
    </location>
    <ligand>
        <name>an epoxide</name>
        <dbReference type="ChEBI" id="CHEBI:32955"/>
    </ligand>
</feature>
<feature type="site" description="Contributes to the formation of an oxyanion binding site for the epoxide oxygen of substrate" evidence="2">
    <location>
        <position position="150"/>
    </location>
</feature>
<feature type="site" description="Contributes to the formation of an oxyanion binding site for the epoxide oxygen of substrate" evidence="2">
    <location>
        <position position="230"/>
    </location>
</feature>
<evidence type="ECO:0000250" key="1">
    <source>
        <dbReference type="UniProtKB" id="P34913"/>
    </source>
</evidence>
<evidence type="ECO:0000250" key="2">
    <source>
        <dbReference type="UniProtKB" id="P95276"/>
    </source>
</evidence>
<evidence type="ECO:0000255" key="3"/>
<evidence type="ECO:0000269" key="4">
    <source>
    </source>
</evidence>
<evidence type="ECO:0000269" key="5">
    <source>
    </source>
</evidence>
<evidence type="ECO:0000303" key="6">
    <source>
    </source>
</evidence>
<evidence type="ECO:0000303" key="7">
    <source>
    </source>
</evidence>
<evidence type="ECO:0000305" key="8"/>
<evidence type="ECO:0000305" key="9">
    <source>
    </source>
</evidence>
<gene>
    <name evidence="6" type="primary">EPH2</name>
</gene>
<protein>
    <recommendedName>
        <fullName evidence="6">Epoxide hydrolase 2</fullName>
        <shortName evidence="6 7">SgEPH2</shortName>
        <ecNumber evidence="4">3.3.2.10</ecNumber>
    </recommendedName>
    <alternativeName>
        <fullName evidence="8">24,25-dihydroxycucurbitadienol synthase EPH2</fullName>
        <ecNumber evidence="4">3.3.2.-</ecNumber>
    </alternativeName>
</protein>
<proteinExistence type="evidence at protein level"/>